<feature type="chain" id="PRO_1000069543" description="NAD-dependent malic enzyme">
    <location>
        <begin position="1"/>
        <end position="562"/>
    </location>
</feature>
<feature type="active site" description="Proton donor" evidence="1">
    <location>
        <position position="101"/>
    </location>
</feature>
<feature type="active site" description="Proton acceptor" evidence="1">
    <location>
        <position position="172"/>
    </location>
</feature>
<feature type="binding site" evidence="1">
    <location>
        <position position="154"/>
    </location>
    <ligand>
        <name>NAD(+)</name>
        <dbReference type="ChEBI" id="CHEBI:57540"/>
    </ligand>
</feature>
<feature type="binding site" evidence="1">
    <location>
        <position position="243"/>
    </location>
    <ligand>
        <name>a divalent metal cation</name>
        <dbReference type="ChEBI" id="CHEBI:60240"/>
    </ligand>
</feature>
<feature type="binding site" evidence="1">
    <location>
        <position position="244"/>
    </location>
    <ligand>
        <name>a divalent metal cation</name>
        <dbReference type="ChEBI" id="CHEBI:60240"/>
    </ligand>
</feature>
<feature type="binding site" evidence="1">
    <location>
        <position position="267"/>
    </location>
    <ligand>
        <name>a divalent metal cation</name>
        <dbReference type="ChEBI" id="CHEBI:60240"/>
    </ligand>
</feature>
<feature type="binding site" evidence="1">
    <location>
        <position position="267"/>
    </location>
    <ligand>
        <name>NAD(+)</name>
        <dbReference type="ChEBI" id="CHEBI:57540"/>
    </ligand>
</feature>
<feature type="binding site" evidence="1">
    <location>
        <position position="415"/>
    </location>
    <ligand>
        <name>NAD(+)</name>
        <dbReference type="ChEBI" id="CHEBI:57540"/>
    </ligand>
</feature>
<feature type="site" description="Important for activity" evidence="1">
    <location>
        <position position="267"/>
    </location>
</feature>
<keyword id="KW-0479">Metal-binding</keyword>
<keyword id="KW-0520">NAD</keyword>
<keyword id="KW-0560">Oxidoreductase</keyword>
<keyword id="KW-1185">Reference proteome</keyword>
<dbReference type="EC" id="1.1.1.38" evidence="1"/>
<dbReference type="EMBL" id="CP000606">
    <property type="protein sequence ID" value="ABO24828.1"/>
    <property type="molecule type" value="Genomic_DNA"/>
</dbReference>
<dbReference type="RefSeq" id="WP_011866759.1">
    <property type="nucleotide sequence ID" value="NC_009092.1"/>
</dbReference>
<dbReference type="SMR" id="A3QH80"/>
<dbReference type="STRING" id="323850.Shew_2962"/>
<dbReference type="KEGG" id="slo:Shew_2962"/>
<dbReference type="eggNOG" id="COG0281">
    <property type="taxonomic scope" value="Bacteria"/>
</dbReference>
<dbReference type="HOGENOM" id="CLU_011405_5_2_6"/>
<dbReference type="OrthoDB" id="3314528at2"/>
<dbReference type="Proteomes" id="UP000001558">
    <property type="component" value="Chromosome"/>
</dbReference>
<dbReference type="GO" id="GO:0005829">
    <property type="term" value="C:cytosol"/>
    <property type="evidence" value="ECO:0007669"/>
    <property type="project" value="TreeGrafter"/>
</dbReference>
<dbReference type="GO" id="GO:0004471">
    <property type="term" value="F:malate dehydrogenase (decarboxylating) (NAD+) activity"/>
    <property type="evidence" value="ECO:0007669"/>
    <property type="project" value="UniProtKB-UniRule"/>
</dbReference>
<dbReference type="GO" id="GO:0046872">
    <property type="term" value="F:metal ion binding"/>
    <property type="evidence" value="ECO:0007669"/>
    <property type="project" value="UniProtKB-KW"/>
</dbReference>
<dbReference type="GO" id="GO:0051287">
    <property type="term" value="F:NAD binding"/>
    <property type="evidence" value="ECO:0007669"/>
    <property type="project" value="InterPro"/>
</dbReference>
<dbReference type="GO" id="GO:0008948">
    <property type="term" value="F:oxaloacetate decarboxylase activity"/>
    <property type="evidence" value="ECO:0007669"/>
    <property type="project" value="UniProtKB-UniRule"/>
</dbReference>
<dbReference type="GO" id="GO:0006108">
    <property type="term" value="P:malate metabolic process"/>
    <property type="evidence" value="ECO:0007669"/>
    <property type="project" value="TreeGrafter"/>
</dbReference>
<dbReference type="CDD" id="cd05312">
    <property type="entry name" value="NAD_bind_1_malic_enz"/>
    <property type="match status" value="1"/>
</dbReference>
<dbReference type="FunFam" id="3.40.50.10380:FF:000001">
    <property type="entry name" value="NAD-dependent malic enzyme"/>
    <property type="match status" value="1"/>
</dbReference>
<dbReference type="FunFam" id="3.40.50.720:FF:000055">
    <property type="entry name" value="NAD-dependent malic enzyme"/>
    <property type="match status" value="1"/>
</dbReference>
<dbReference type="Gene3D" id="3.40.50.10380">
    <property type="entry name" value="Malic enzyme, N-terminal domain"/>
    <property type="match status" value="1"/>
</dbReference>
<dbReference type="Gene3D" id="3.40.50.720">
    <property type="entry name" value="NAD(P)-binding Rossmann-like Domain"/>
    <property type="match status" value="1"/>
</dbReference>
<dbReference type="HAMAP" id="MF_01619">
    <property type="entry name" value="NAD_malic_enz"/>
    <property type="match status" value="1"/>
</dbReference>
<dbReference type="InterPro" id="IPR046346">
    <property type="entry name" value="Aminoacid_DH-like_N_sf"/>
</dbReference>
<dbReference type="InterPro" id="IPR015884">
    <property type="entry name" value="Malic_enzyme_CS"/>
</dbReference>
<dbReference type="InterPro" id="IPR012301">
    <property type="entry name" value="Malic_N_dom"/>
</dbReference>
<dbReference type="InterPro" id="IPR037062">
    <property type="entry name" value="Malic_N_dom_sf"/>
</dbReference>
<dbReference type="InterPro" id="IPR012302">
    <property type="entry name" value="Malic_NAD-bd"/>
</dbReference>
<dbReference type="InterPro" id="IPR001891">
    <property type="entry name" value="Malic_OxRdtase"/>
</dbReference>
<dbReference type="InterPro" id="IPR036291">
    <property type="entry name" value="NAD(P)-bd_dom_sf"/>
</dbReference>
<dbReference type="InterPro" id="IPR023667">
    <property type="entry name" value="NAD_malic_enz_proteobac"/>
</dbReference>
<dbReference type="NCBIfam" id="NF010052">
    <property type="entry name" value="PRK13529.1"/>
    <property type="match status" value="1"/>
</dbReference>
<dbReference type="PANTHER" id="PTHR23406">
    <property type="entry name" value="MALIC ENZYME-RELATED"/>
    <property type="match status" value="1"/>
</dbReference>
<dbReference type="PANTHER" id="PTHR23406:SF34">
    <property type="entry name" value="NAD-DEPENDENT MALIC ENZYME, MITOCHONDRIAL"/>
    <property type="match status" value="1"/>
</dbReference>
<dbReference type="Pfam" id="PF00390">
    <property type="entry name" value="malic"/>
    <property type="match status" value="1"/>
</dbReference>
<dbReference type="Pfam" id="PF03949">
    <property type="entry name" value="Malic_M"/>
    <property type="match status" value="1"/>
</dbReference>
<dbReference type="PIRSF" id="PIRSF000106">
    <property type="entry name" value="ME"/>
    <property type="match status" value="1"/>
</dbReference>
<dbReference type="PRINTS" id="PR00072">
    <property type="entry name" value="MALOXRDTASE"/>
</dbReference>
<dbReference type="SMART" id="SM01274">
    <property type="entry name" value="malic"/>
    <property type="match status" value="1"/>
</dbReference>
<dbReference type="SMART" id="SM00919">
    <property type="entry name" value="Malic_M"/>
    <property type="match status" value="1"/>
</dbReference>
<dbReference type="SUPFAM" id="SSF53223">
    <property type="entry name" value="Aminoacid dehydrogenase-like, N-terminal domain"/>
    <property type="match status" value="1"/>
</dbReference>
<dbReference type="SUPFAM" id="SSF51735">
    <property type="entry name" value="NAD(P)-binding Rossmann-fold domains"/>
    <property type="match status" value="1"/>
</dbReference>
<dbReference type="PROSITE" id="PS00331">
    <property type="entry name" value="MALIC_ENZYMES"/>
    <property type="match status" value="1"/>
</dbReference>
<evidence type="ECO:0000255" key="1">
    <source>
        <dbReference type="HAMAP-Rule" id="MF_01619"/>
    </source>
</evidence>
<organism>
    <name type="scientific">Shewanella loihica (strain ATCC BAA-1088 / PV-4)</name>
    <dbReference type="NCBI Taxonomy" id="323850"/>
    <lineage>
        <taxon>Bacteria</taxon>
        <taxon>Pseudomonadati</taxon>
        <taxon>Pseudomonadota</taxon>
        <taxon>Gammaproteobacteria</taxon>
        <taxon>Alteromonadales</taxon>
        <taxon>Shewanellaceae</taxon>
        <taxon>Shewanella</taxon>
    </lineage>
</organism>
<gene>
    <name evidence="1" type="primary">maeA</name>
    <name type="ordered locus">Shew_2962</name>
</gene>
<reference key="1">
    <citation type="submission" date="2007-03" db="EMBL/GenBank/DDBJ databases">
        <title>Complete sequence of Shewanella loihica PV-4.</title>
        <authorList>
            <consortium name="US DOE Joint Genome Institute"/>
            <person name="Copeland A."/>
            <person name="Lucas S."/>
            <person name="Lapidus A."/>
            <person name="Barry K."/>
            <person name="Detter J.C."/>
            <person name="Glavina del Rio T."/>
            <person name="Hammon N."/>
            <person name="Israni S."/>
            <person name="Dalin E."/>
            <person name="Tice H."/>
            <person name="Pitluck S."/>
            <person name="Chain P."/>
            <person name="Malfatti S."/>
            <person name="Shin M."/>
            <person name="Vergez L."/>
            <person name="Schmutz J."/>
            <person name="Larimer F."/>
            <person name="Land M."/>
            <person name="Hauser L."/>
            <person name="Kyrpides N."/>
            <person name="Mikhailova N."/>
            <person name="Romine M.F."/>
            <person name="Serres G."/>
            <person name="Fredrickson J."/>
            <person name="Tiedje J."/>
            <person name="Richardson P."/>
        </authorList>
    </citation>
    <scope>NUCLEOTIDE SEQUENCE [LARGE SCALE GENOMIC DNA]</scope>
    <source>
        <strain>ATCC BAA-1088 / PV-4</strain>
    </source>
</reference>
<comment type="catalytic activity">
    <reaction evidence="1">
        <text>(S)-malate + NAD(+) = pyruvate + CO2 + NADH</text>
        <dbReference type="Rhea" id="RHEA:12653"/>
        <dbReference type="ChEBI" id="CHEBI:15361"/>
        <dbReference type="ChEBI" id="CHEBI:15589"/>
        <dbReference type="ChEBI" id="CHEBI:16526"/>
        <dbReference type="ChEBI" id="CHEBI:57540"/>
        <dbReference type="ChEBI" id="CHEBI:57945"/>
        <dbReference type="EC" id="1.1.1.38"/>
    </reaction>
</comment>
<comment type="catalytic activity">
    <reaction evidence="1">
        <text>oxaloacetate + H(+) = pyruvate + CO2</text>
        <dbReference type="Rhea" id="RHEA:15641"/>
        <dbReference type="ChEBI" id="CHEBI:15361"/>
        <dbReference type="ChEBI" id="CHEBI:15378"/>
        <dbReference type="ChEBI" id="CHEBI:16452"/>
        <dbReference type="ChEBI" id="CHEBI:16526"/>
        <dbReference type="EC" id="1.1.1.38"/>
    </reaction>
</comment>
<comment type="cofactor">
    <cofactor evidence="1">
        <name>Mg(2+)</name>
        <dbReference type="ChEBI" id="CHEBI:18420"/>
    </cofactor>
    <cofactor evidence="1">
        <name>Mn(2+)</name>
        <dbReference type="ChEBI" id="CHEBI:29035"/>
    </cofactor>
    <text evidence="1">Divalent metal cations. Prefers magnesium or manganese.</text>
</comment>
<comment type="subunit">
    <text evidence="1">Homotetramer.</text>
</comment>
<comment type="similarity">
    <text evidence="1">Belongs to the malic enzymes family.</text>
</comment>
<sequence>MDDNKRPLYLPFAGPAILEAPLINKGSAFTEEERIFFNLEGLLPHVIETIEEQASRAYDQYKNFGNDLDRHIYLRNIQDTNETLYYRLLQNHITEMMPIIYTPTVGLACERFSKNYRRNRGLFISYPNKDRIDDILNNSTRQKVKIIVVTDGERILGLGDQGIGGMGIPIGKLSLYTSCGGISPAYTLPITLDVGTDNPHLLEDPMYMGWRNQRIGGEEYAEFVEAFMEAVHRRWPDALIQFEDFAQKNAMPLLERYKDRYCCFNDDIQGTAAVTVGSLLAACQAADSKLSQQRIAFLGAGSAGCGIAEAIIAQMVSEGISDEQARQQVFMVDRWGLLQDNMPNLLPFQQNLAQQVAKVEGWNTESENISLLDVMHNGKPTVLIGVSGAPGLFSEEIIKAMHTHCERPIIFPLSNPTSRVEATPKDILHWTKGQALVATGSPFEPVVIEEQTYEIAQCNNSYIFPGIGLGVLASGAKRVSNEMLMASSRALAECSPLAKDGEGSLLPALEDIHSVSKHIAFAVGKVAIEQGHALPASDELLMQAIEDNFWTAEYRRYKRTSF</sequence>
<proteinExistence type="inferred from homology"/>
<protein>
    <recommendedName>
        <fullName evidence="1">NAD-dependent malic enzyme</fullName>
        <shortName evidence="1">NAD-ME</shortName>
        <ecNumber evidence="1">1.1.1.38</ecNumber>
    </recommendedName>
</protein>
<name>MAO1_SHELP</name>
<accession>A3QH80</accession>